<reference key="1">
    <citation type="journal article" date="2001" name="Plant Physiol.">
        <title>Regulation of CAX1, an Arabidopsis Ca(2+)/H+ antiporter. Identification of an N-terminal autoinhibitory domain.</title>
        <authorList>
            <person name="Pittman J.K."/>
            <person name="Hirschi K.D."/>
        </authorList>
    </citation>
    <scope>NUCLEOTIDE SEQUENCE [MRNA]</scope>
</reference>
<reference key="2">
    <citation type="journal article" date="1999" name="Nature">
        <title>Sequence and analysis of chromosome 2 of the plant Arabidopsis thaliana.</title>
        <authorList>
            <person name="Lin X."/>
            <person name="Kaul S."/>
            <person name="Rounsley S.D."/>
            <person name="Shea T.P."/>
            <person name="Benito M.-I."/>
            <person name="Town C.D."/>
            <person name="Fujii C.Y."/>
            <person name="Mason T.M."/>
            <person name="Bowman C.L."/>
            <person name="Barnstead M.E."/>
            <person name="Feldblyum T.V."/>
            <person name="Buell C.R."/>
            <person name="Ketchum K.A."/>
            <person name="Lee J.J."/>
            <person name="Ronning C.M."/>
            <person name="Koo H.L."/>
            <person name="Moffat K.S."/>
            <person name="Cronin L.A."/>
            <person name="Shen M."/>
            <person name="Pai G."/>
            <person name="Van Aken S."/>
            <person name="Umayam L."/>
            <person name="Tallon L.J."/>
            <person name="Gill J.E."/>
            <person name="Adams M.D."/>
            <person name="Carrera A.J."/>
            <person name="Creasy T.H."/>
            <person name="Goodman H.M."/>
            <person name="Somerville C.R."/>
            <person name="Copenhaver G.P."/>
            <person name="Preuss D."/>
            <person name="Nierman W.C."/>
            <person name="White O."/>
            <person name="Eisen J.A."/>
            <person name="Salzberg S.L."/>
            <person name="Fraser C.M."/>
            <person name="Venter J.C."/>
        </authorList>
    </citation>
    <scope>NUCLEOTIDE SEQUENCE [LARGE SCALE GENOMIC DNA]</scope>
    <source>
        <strain>cv. Columbia</strain>
    </source>
</reference>
<reference key="3">
    <citation type="journal article" date="2017" name="Plant J.">
        <title>Araport11: a complete reannotation of the Arabidopsis thaliana reference genome.</title>
        <authorList>
            <person name="Cheng C.Y."/>
            <person name="Krishnakumar V."/>
            <person name="Chan A.P."/>
            <person name="Thibaud-Nissen F."/>
            <person name="Schobel S."/>
            <person name="Town C.D."/>
        </authorList>
    </citation>
    <scope>GENOME REANNOTATION</scope>
    <source>
        <strain>cv. Columbia</strain>
    </source>
</reference>
<reference key="4">
    <citation type="journal article" date="2003" name="Science">
        <title>Empirical analysis of transcriptional activity in the Arabidopsis genome.</title>
        <authorList>
            <person name="Yamada K."/>
            <person name="Lim J."/>
            <person name="Dale J.M."/>
            <person name="Chen H."/>
            <person name="Shinn P."/>
            <person name="Palm C.J."/>
            <person name="Southwick A.M."/>
            <person name="Wu H.C."/>
            <person name="Kim C.J."/>
            <person name="Nguyen M."/>
            <person name="Pham P.K."/>
            <person name="Cheuk R.F."/>
            <person name="Karlin-Newmann G."/>
            <person name="Liu S.X."/>
            <person name="Lam B."/>
            <person name="Sakano H."/>
            <person name="Wu T."/>
            <person name="Yu G."/>
            <person name="Miranda M."/>
            <person name="Quach H.L."/>
            <person name="Tripp M."/>
            <person name="Chang C.H."/>
            <person name="Lee J.M."/>
            <person name="Toriumi M.J."/>
            <person name="Chan M.M."/>
            <person name="Tang C.C."/>
            <person name="Onodera C.S."/>
            <person name="Deng J.M."/>
            <person name="Akiyama K."/>
            <person name="Ansari Y."/>
            <person name="Arakawa T."/>
            <person name="Banh J."/>
            <person name="Banno F."/>
            <person name="Bowser L."/>
            <person name="Brooks S.Y."/>
            <person name="Carninci P."/>
            <person name="Chao Q."/>
            <person name="Choy N."/>
            <person name="Enju A."/>
            <person name="Goldsmith A.D."/>
            <person name="Gurjal M."/>
            <person name="Hansen N.F."/>
            <person name="Hayashizaki Y."/>
            <person name="Johnson-Hopson C."/>
            <person name="Hsuan V.W."/>
            <person name="Iida K."/>
            <person name="Karnes M."/>
            <person name="Khan S."/>
            <person name="Koesema E."/>
            <person name="Ishida J."/>
            <person name="Jiang P.X."/>
            <person name="Jones T."/>
            <person name="Kawai J."/>
            <person name="Kamiya A."/>
            <person name="Meyers C."/>
            <person name="Nakajima M."/>
            <person name="Narusaka M."/>
            <person name="Seki M."/>
            <person name="Sakurai T."/>
            <person name="Satou M."/>
            <person name="Tamse R."/>
            <person name="Vaysberg M."/>
            <person name="Wallender E.K."/>
            <person name="Wong C."/>
            <person name="Yamamura Y."/>
            <person name="Yuan S."/>
            <person name="Shinozaki K."/>
            <person name="Davis R.W."/>
            <person name="Theologis A."/>
            <person name="Ecker J.R."/>
        </authorList>
    </citation>
    <scope>NUCLEOTIDE SEQUENCE [LARGE SCALE MRNA]</scope>
    <source>
        <strain>cv. Columbia</strain>
    </source>
</reference>
<reference key="5">
    <citation type="journal article" date="1996" name="Proc. Natl. Acad. Sci. U.S.A.">
        <title>CAX1, an H+/Ca2+ antiporter from Arabidopsis.</title>
        <authorList>
            <person name="Hirschi K.D."/>
            <person name="Zhen R.-G."/>
            <person name="Cunningham K.W."/>
            <person name="Rea P.A."/>
            <person name="Fink G.R."/>
        </authorList>
    </citation>
    <scope>NUCLEOTIDE SEQUENCE [MRNA] OF 37-463</scope>
</reference>
<reference key="6">
    <citation type="submission" date="2005-03" db="EMBL/GenBank/DDBJ databases">
        <title>Large-scale analysis of RIKEN Arabidopsis full-length (RAFL) cDNAs.</title>
        <authorList>
            <person name="Totoki Y."/>
            <person name="Seki M."/>
            <person name="Ishida J."/>
            <person name="Nakajima M."/>
            <person name="Enju A."/>
            <person name="Kamiya A."/>
            <person name="Narusaka M."/>
            <person name="Shin-i T."/>
            <person name="Nakagawa M."/>
            <person name="Sakamoto N."/>
            <person name="Oishi K."/>
            <person name="Kohara Y."/>
            <person name="Kobayashi M."/>
            <person name="Toyoda A."/>
            <person name="Sakaki Y."/>
            <person name="Sakurai T."/>
            <person name="Iida K."/>
            <person name="Akiyama K."/>
            <person name="Satou M."/>
            <person name="Toyoda T."/>
            <person name="Konagaya A."/>
            <person name="Carninci P."/>
            <person name="Kawai J."/>
            <person name="Hayashizaki Y."/>
            <person name="Shinozaki K."/>
        </authorList>
    </citation>
    <scope>NUCLEOTIDE SEQUENCE [LARGE SCALE MRNA] OF 160-463</scope>
    <source>
        <strain>cv. Columbia</strain>
    </source>
</reference>
<reference key="7">
    <citation type="journal article" date="1999" name="Plant Cell">
        <title>Expression of Arabidopsis CAX1 in tobacco: altered calcium homeostasis and increased stress sensitivity.</title>
        <authorList>
            <person name="Hirschi K.D."/>
        </authorList>
    </citation>
    <scope>INDUCTION</scope>
</reference>
<reference key="8">
    <citation type="journal article" date="2001" name="J. Biol. Chem.">
        <title>Structural determinants of Ca2+ transport in the Arabidopsis H+/Ca2+ antiporter CAX1.</title>
        <authorList>
            <person name="Shigaki T."/>
            <person name="Cheng N.-H."/>
            <person name="Pittman J.K."/>
            <person name="Hirschi K.D."/>
        </authorList>
    </citation>
    <scope>ACTIVITY REGULATION</scope>
</reference>
<reference key="9">
    <citation type="journal article" date="2001" name="Plant Physiol.">
        <title>Phylogenetic relationships within cation transporter families of Arabidopsis.</title>
        <authorList>
            <person name="Maeser P."/>
            <person name="Thomine S."/>
            <person name="Schroeder J.I."/>
            <person name="Ward J.M."/>
            <person name="Hirschi K."/>
            <person name="Sze H."/>
            <person name="Talke I.N."/>
            <person name="Amtmann A."/>
            <person name="Maathuis F.J.M."/>
            <person name="Sanders D."/>
            <person name="Harper J.F."/>
            <person name="Tchieu J."/>
            <person name="Gribskov M."/>
            <person name="Persans M.W."/>
            <person name="Salt D.E."/>
            <person name="Kim S.A."/>
            <person name="Guerinot M.L."/>
        </authorList>
    </citation>
    <scope>GENE FAMILY</scope>
    <scope>NOMENCLATURE</scope>
</reference>
<reference key="10">
    <citation type="journal article" date="2002" name="J. Biol. Chem.">
        <title>Mechanism of N-terminal autoinhibition in the Arabidopsis Ca(2+)/H(+) antiporter CAX1.</title>
        <authorList>
            <person name="Pittman J.K."/>
            <person name="Shigaki T."/>
            <person name="Cheng N.-H."/>
            <person name="Hirschi K.D."/>
        </authorList>
    </citation>
    <scope>MUTAGENESIS OF THR-6; SER-10; SER-24; SER-25; ARG-29; ARG-32 AND THR-33</scope>
</reference>
<reference key="11">
    <citation type="journal article" date="2003" name="J. Biol. Chem.">
        <title>Cloning and characterization of CXIP1 A novel PICOT domain-containing Arabidopsis protein that associates with CAX1.</title>
        <authorList>
            <person name="Cheng N.-H."/>
            <person name="Hirschi K.D."/>
        </authorList>
    </citation>
    <scope>ACTIVITY REGULATION</scope>
    <scope>INTERACTION WITH GRXS14</scope>
</reference>
<reference key="12">
    <citation type="journal article" date="2003" name="Plant Cell">
        <title>The Arabidopsis cax1 mutant exhibits impaired ion homeostasis, development, and hormonal responses and reveals interplay among vacuolar transporters.</title>
        <authorList>
            <person name="Cheng N.-H."/>
            <person name="Pittman J.K."/>
            <person name="Barkla B.J."/>
            <person name="Shigaki T."/>
            <person name="Hirschi K.D."/>
        </authorList>
    </citation>
    <scope>FUNCTION</scope>
    <scope>SUBCELLULAR LOCATION</scope>
</reference>
<reference key="13">
    <citation type="journal article" date="2003" name="Plant Cell">
        <title>Mutations in the Ca2+/H+ transporter CAX1 increase CBF/DREB1 expression and the cold-acclimation response in Arabidopsis.</title>
        <authorList>
            <person name="Catala R."/>
            <person name="Santos E."/>
            <person name="Alonso J.M."/>
            <person name="Ecker J.R."/>
            <person name="Martinez-Zapater J.M."/>
            <person name="Salinas J."/>
        </authorList>
    </citation>
    <scope>FUNCTION</scope>
    <scope>TISSUE SPECIFICITY</scope>
    <scope>INDUCTION</scope>
</reference>
<reference key="14">
    <citation type="journal article" date="2004" name="FEBS Lett.">
        <title>Characterization of CXIP4, a novel Arabidopsis protein that activates the H+/Ca2+ antiporter, CAX1.</title>
        <authorList>
            <person name="Cheng N.-H."/>
            <person name="Liu J.-Z."/>
            <person name="Nelson R.S."/>
            <person name="Hirschi K.D."/>
        </authorList>
    </citation>
    <scope>ACTIVITY REGULATION</scope>
    <scope>INTERACTION WITH CXIP4</scope>
</reference>
<reference key="15">
    <citation type="journal article" date="2005" name="J. Agric. Food Chem.">
        <title>Genetic manipulation for enhancing calcium content in potato tuber.</title>
        <authorList>
            <person name="Park S."/>
            <person name="Kang T.S."/>
            <person name="Kim C.K."/>
            <person name="Han J.S."/>
            <person name="Kim S."/>
            <person name="Smith R.H."/>
            <person name="Pike L.M."/>
            <person name="Hirschi K.D."/>
        </authorList>
    </citation>
    <scope>BIOTECHNOLOGY</scope>
</reference>
<reference key="16">
    <citation type="journal article" date="2005" name="FEBS Lett.">
        <title>Evidence of differential pH regulation of the Arabidopsis vacuolar Ca2+/H+ antiporters CAX1 and CAX2.</title>
        <authorList>
            <person name="Pittman J.K."/>
            <person name="Shigaki T."/>
            <person name="Hirschi K.D."/>
        </authorList>
    </citation>
    <scope>BIOPHYSICOCHEMICAL PROPERTIES</scope>
</reference>
<reference key="17">
    <citation type="journal article" date="2005" name="J. Biol. Chem.">
        <title>Identification of a crucial histidine involved in metal transport activity in the Arabidopsis cation/H+ exchanger CAX1.</title>
        <authorList>
            <person name="Shigaki T."/>
            <person name="Barkla B.J."/>
            <person name="Miranda-Vergara M.C."/>
            <person name="Zhao J."/>
            <person name="Pantoja O."/>
            <person name="Hirschi K.D."/>
        </authorList>
    </citation>
    <scope>BIOPHYSICOCHEMICAL PROPERTIES</scope>
    <scope>MUTAGENESIS OF HIS-259; HIS-338; HIS-412; HIS-443 AND HIS-446</scope>
</reference>
<reference key="18">
    <citation type="journal article" date="2005" name="Plant Physiol.">
        <title>Functional association of Arabidopsis CAX1 and CAX3 is required for normal growth and ion homeostasis.</title>
        <authorList>
            <person name="Cheng N.-H."/>
            <person name="Pittman J.K."/>
            <person name="Shigaki T."/>
            <person name="Lachmansingh J."/>
            <person name="LeClere S."/>
            <person name="Lahner B."/>
            <person name="Salt D.E."/>
            <person name="Hirschi K.D."/>
        </authorList>
    </citation>
    <scope>FUNCTION</scope>
    <scope>DISRUPTION PHENOTYPE</scope>
</reference>
<reference key="19">
    <citation type="journal article" date="2005" name="Plant Physiol.">
        <title>Increased calcium levels and prolonged shelf life in tomatoes expressing Arabidopsis H+/Ca2+ transporters.</title>
        <authorList>
            <person name="Park S."/>
            <person name="Cheng N.-H."/>
            <person name="Pittman J.K."/>
            <person name="Yoo K.S."/>
            <person name="Park J."/>
            <person name="Smith R.H."/>
            <person name="Hirschi K.D."/>
        </authorList>
    </citation>
    <scope>ACTIVITY REGULATION</scope>
    <scope>BIOTECHNOLOGY</scope>
</reference>
<reference key="20">
    <citation type="journal article" date="2012" name="Mol. Cell. Proteomics">
        <title>Comparative large-scale characterisation of plant vs. mammal proteins reveals similar and idiosyncratic N-alpha acetylation features.</title>
        <authorList>
            <person name="Bienvenut W.V."/>
            <person name="Sumpton D."/>
            <person name="Martinez A."/>
            <person name="Lilla S."/>
            <person name="Espagne C."/>
            <person name="Meinnel T."/>
            <person name="Giglione C."/>
        </authorList>
    </citation>
    <scope>ACETYLATION [LARGE SCALE ANALYSIS] AT ALA-2</scope>
    <scope>CLEAVAGE OF INITIATOR METHIONINE [LARGE SCALE ANALYSIS]</scope>
    <scope>IDENTIFICATION BY MASS SPECTROMETRY [LARGE SCALE ANALYSIS]</scope>
</reference>
<name>CAX1_ARATH</name>
<sequence length="463" mass="50177">MAGIVTEPWSVAENGNPSITAKGSSRELRLGRTAHNMSSSSLRKKSDLRVIQKVPYKGLKDFLSNLQEVILGTKLAILFPAIPAAIICTYCGVSQPWIFGLSLLGLTPLAERVSFLTEQLAFYTGPTLGGLLNATCGNATELIIAILALTNNKVAVVKYSLLGSILSNLLLVLGTSLFCGGIANIRREQRFDRKQADVNFFLLLLGFLCHLLPLLVGYLKNGEASAAVLSDMQLSISRGFSIVMLISYIAYLVFQLWTHRQLFDAQEQEDEYDDDVEQETAVISFWSGFAWLVGMTLVIALLSEYVVATIEEASDKWNLSVSFISIILLPIVGNAAEHAGAVIFAFKNKLDISLGVALGSATQIGLFVVPLTIIVAWILGINMDLNFGPLETGCLAVSIIITAFTLQDGSSHYMKGLVLLLCYFIIAICFFVDKLPQKQNAIHLGHQAMNNVVTATGGGVFSS</sequence>
<dbReference type="EMBL" id="AF461691">
    <property type="protein sequence ID" value="AAL66749.1"/>
    <property type="molecule type" value="mRNA"/>
</dbReference>
<dbReference type="EMBL" id="AC003028">
    <property type="protein sequence ID" value="AAC27166.1"/>
    <property type="molecule type" value="Genomic_DNA"/>
</dbReference>
<dbReference type="EMBL" id="CP002685">
    <property type="protein sequence ID" value="AEC09499.1"/>
    <property type="molecule type" value="Genomic_DNA"/>
</dbReference>
<dbReference type="EMBL" id="CP002685">
    <property type="protein sequence ID" value="AEC09501.1"/>
    <property type="molecule type" value="Genomic_DNA"/>
</dbReference>
<dbReference type="EMBL" id="AF372938">
    <property type="protein sequence ID" value="AAK50078.1"/>
    <property type="molecule type" value="mRNA"/>
</dbReference>
<dbReference type="EMBL" id="U57411">
    <property type="protein sequence ID" value="AAB05913.2"/>
    <property type="molecule type" value="mRNA"/>
</dbReference>
<dbReference type="EMBL" id="AK222114">
    <property type="protein sequence ID" value="BAD95074.1"/>
    <property type="molecule type" value="mRNA"/>
</dbReference>
<dbReference type="PIR" id="T01249">
    <property type="entry name" value="T01249"/>
</dbReference>
<dbReference type="RefSeq" id="NP_181352.1">
    <molecule id="Q39253-1"/>
    <property type="nucleotide sequence ID" value="NM_129373.4"/>
</dbReference>
<dbReference type="RefSeq" id="NP_973630.1">
    <molecule id="Q39253-2"/>
    <property type="nucleotide sequence ID" value="NM_201901.4"/>
</dbReference>
<dbReference type="SMR" id="Q39253"/>
<dbReference type="BioGRID" id="3739">
    <property type="interactions" value="6"/>
</dbReference>
<dbReference type="ComplexPortal" id="CPX-1326">
    <property type="entry name" value="CAX1-CAX3 complex"/>
</dbReference>
<dbReference type="ComplexPortal" id="CPX-1428">
    <property type="entry name" value="CAX1 homodimer"/>
</dbReference>
<dbReference type="FunCoup" id="Q39253">
    <property type="interactions" value="71"/>
</dbReference>
<dbReference type="IntAct" id="Q39253">
    <property type="interactions" value="1"/>
</dbReference>
<dbReference type="STRING" id="3702.Q39253"/>
<dbReference type="TCDB" id="1.A.1.9.2.3">
    <property type="family name" value="the voltage-gated ion channel (vic) superfamily"/>
</dbReference>
<dbReference type="TCDB" id="2.A.19.2.3">
    <property type="family name" value="the ca(2+):cation antiporter (caca) family"/>
</dbReference>
<dbReference type="GlyCosmos" id="Q39253">
    <property type="glycosylation" value="1 site, No reported glycans"/>
</dbReference>
<dbReference type="GlyGen" id="Q39253">
    <property type="glycosylation" value="1 site"/>
</dbReference>
<dbReference type="iPTMnet" id="Q39253"/>
<dbReference type="PaxDb" id="3702-AT2G38170.3"/>
<dbReference type="ProteomicsDB" id="223870">
    <molecule id="Q39253-1"/>
</dbReference>
<dbReference type="EnsemblPlants" id="AT2G38170.1">
    <molecule id="Q39253-1"/>
    <property type="protein sequence ID" value="AT2G38170.1"/>
    <property type="gene ID" value="AT2G38170"/>
</dbReference>
<dbReference type="EnsemblPlants" id="AT2G38170.3">
    <molecule id="Q39253-2"/>
    <property type="protein sequence ID" value="AT2G38170.3"/>
    <property type="gene ID" value="AT2G38170"/>
</dbReference>
<dbReference type="GeneID" id="818395"/>
<dbReference type="Gramene" id="AT2G38170.1">
    <molecule id="Q39253-1"/>
    <property type="protein sequence ID" value="AT2G38170.1"/>
    <property type="gene ID" value="AT2G38170"/>
</dbReference>
<dbReference type="Gramene" id="AT2G38170.3">
    <molecule id="Q39253-2"/>
    <property type="protein sequence ID" value="AT2G38170.3"/>
    <property type="gene ID" value="AT2G38170"/>
</dbReference>
<dbReference type="KEGG" id="ath:AT2G38170"/>
<dbReference type="Araport" id="AT2G38170"/>
<dbReference type="TAIR" id="AT2G38170">
    <property type="gene designation" value="CAX1"/>
</dbReference>
<dbReference type="eggNOG" id="KOG1397">
    <property type="taxonomic scope" value="Eukaryota"/>
</dbReference>
<dbReference type="HOGENOM" id="CLU_008721_4_2_1"/>
<dbReference type="InParanoid" id="Q39253"/>
<dbReference type="OMA" id="FVALHCH"/>
<dbReference type="OrthoDB" id="1699231at2759"/>
<dbReference type="PhylomeDB" id="Q39253"/>
<dbReference type="SABIO-RK" id="Q39253"/>
<dbReference type="PRO" id="PR:Q39253"/>
<dbReference type="Proteomes" id="UP000006548">
    <property type="component" value="Chromosome 2"/>
</dbReference>
<dbReference type="ExpressionAtlas" id="Q39253">
    <property type="expression patterns" value="baseline and differential"/>
</dbReference>
<dbReference type="GO" id="GO:0061993">
    <property type="term" value="C:calcium:proton antiporter complex"/>
    <property type="evidence" value="ECO:0000353"/>
    <property type="project" value="ComplexPortal"/>
</dbReference>
<dbReference type="GO" id="GO:0000325">
    <property type="term" value="C:plant-type vacuole"/>
    <property type="evidence" value="ECO:0007005"/>
    <property type="project" value="TAIR"/>
</dbReference>
<dbReference type="GO" id="GO:0009705">
    <property type="term" value="C:plant-type vacuole membrane"/>
    <property type="evidence" value="ECO:0000314"/>
    <property type="project" value="ComplexPortal"/>
</dbReference>
<dbReference type="GO" id="GO:0005773">
    <property type="term" value="C:vacuole"/>
    <property type="evidence" value="ECO:0000314"/>
    <property type="project" value="TAIR"/>
</dbReference>
<dbReference type="GO" id="GO:0015369">
    <property type="term" value="F:calcium:proton antiporter activity"/>
    <property type="evidence" value="ECO:0000314"/>
    <property type="project" value="TAIR"/>
</dbReference>
<dbReference type="GO" id="GO:0006816">
    <property type="term" value="P:calcium ion transport"/>
    <property type="evidence" value="ECO:0000314"/>
    <property type="project" value="TAIR"/>
</dbReference>
<dbReference type="GO" id="GO:0009631">
    <property type="term" value="P:cold acclimation"/>
    <property type="evidence" value="ECO:0000315"/>
    <property type="project" value="TAIR"/>
</dbReference>
<dbReference type="GO" id="GO:0006874">
    <property type="term" value="P:intracellular calcium ion homeostasis"/>
    <property type="evidence" value="ECO:0000315"/>
    <property type="project" value="ComplexPortal"/>
</dbReference>
<dbReference type="GO" id="GO:0030026">
    <property type="term" value="P:intracellular manganese ion homeostasis"/>
    <property type="evidence" value="ECO:0000315"/>
    <property type="project" value="TAIR"/>
</dbReference>
<dbReference type="GO" id="GO:0006882">
    <property type="term" value="P:intracellular zinc ion homeostasis"/>
    <property type="evidence" value="ECO:0000315"/>
    <property type="project" value="TAIR"/>
</dbReference>
<dbReference type="GO" id="GO:0010351">
    <property type="term" value="P:lithium ion transport"/>
    <property type="evidence" value="ECO:0000315"/>
    <property type="project" value="ComplexPortal"/>
</dbReference>
<dbReference type="GO" id="GO:0006812">
    <property type="term" value="P:monoatomic cation transport"/>
    <property type="evidence" value="ECO:0000315"/>
    <property type="project" value="ComplexPortal"/>
</dbReference>
<dbReference type="GO" id="GO:0055062">
    <property type="term" value="P:phosphate ion homeostasis"/>
    <property type="evidence" value="ECO:0000316"/>
    <property type="project" value="TAIR"/>
</dbReference>
<dbReference type="GO" id="GO:0010119">
    <property type="term" value="P:regulation of stomatal movement"/>
    <property type="evidence" value="ECO:0000315"/>
    <property type="project" value="ComplexPortal"/>
</dbReference>
<dbReference type="GO" id="GO:0009651">
    <property type="term" value="P:response to salt stress"/>
    <property type="evidence" value="ECO:0000315"/>
    <property type="project" value="TAIR"/>
</dbReference>
<dbReference type="FunFam" id="1.20.1420.30:FF:000008">
    <property type="entry name" value="Vacuolar cation/proton exchanger"/>
    <property type="match status" value="1"/>
</dbReference>
<dbReference type="FunFam" id="1.20.1420.30:FF:000020">
    <property type="entry name" value="Vacuolar cation/proton exchanger"/>
    <property type="match status" value="1"/>
</dbReference>
<dbReference type="Gene3D" id="1.20.1420.30">
    <property type="entry name" value="NCX, central ion-binding region"/>
    <property type="match status" value="2"/>
</dbReference>
<dbReference type="InterPro" id="IPR004713">
    <property type="entry name" value="CaH_exchang"/>
</dbReference>
<dbReference type="InterPro" id="IPR004798">
    <property type="entry name" value="CAX-like"/>
</dbReference>
<dbReference type="InterPro" id="IPR004837">
    <property type="entry name" value="NaCa_Exmemb"/>
</dbReference>
<dbReference type="InterPro" id="IPR044880">
    <property type="entry name" value="NCX_ion-bd_dom_sf"/>
</dbReference>
<dbReference type="NCBIfam" id="TIGR00846">
    <property type="entry name" value="caca2"/>
    <property type="match status" value="1"/>
</dbReference>
<dbReference type="NCBIfam" id="TIGR00378">
    <property type="entry name" value="cax"/>
    <property type="match status" value="1"/>
</dbReference>
<dbReference type="PANTHER" id="PTHR31503">
    <property type="entry name" value="VACUOLAR CALCIUM ION TRANSPORTER"/>
    <property type="match status" value="1"/>
</dbReference>
<dbReference type="PANTHER" id="PTHR31503:SF43">
    <property type="entry name" value="VACUOLAR CATION_PROTON EXCHANGER 1"/>
    <property type="match status" value="1"/>
</dbReference>
<dbReference type="Pfam" id="PF01699">
    <property type="entry name" value="Na_Ca_ex"/>
    <property type="match status" value="2"/>
</dbReference>
<accession>Q39253</accession>
<accession>O80442</accession>
<accession>Q56WC8</accession>
<feature type="initiator methionine" description="Removed" evidence="16">
    <location>
        <position position="1"/>
    </location>
</feature>
<feature type="chain" id="PRO_0000270150" description="Vacuolar cation/proton exchanger 1">
    <location>
        <begin position="2"/>
        <end position="463"/>
    </location>
</feature>
<feature type="topological domain" description="Cytoplasmic" evidence="1">
    <location>
        <begin position="2"/>
        <end position="68"/>
    </location>
</feature>
<feature type="transmembrane region" description="Helical" evidence="1">
    <location>
        <begin position="69"/>
        <end position="89"/>
    </location>
</feature>
<feature type="topological domain" description="Extracellular" evidence="1">
    <location>
        <begin position="90"/>
        <end position="96"/>
    </location>
</feature>
<feature type="transmembrane region" description="Helical" evidence="1">
    <location>
        <begin position="97"/>
        <end position="116"/>
    </location>
</feature>
<feature type="topological domain" description="Cytoplasmic" evidence="1">
    <location>
        <begin position="117"/>
        <end position="127"/>
    </location>
</feature>
<feature type="transmembrane region" description="Helical" evidence="1">
    <location>
        <begin position="128"/>
        <end position="148"/>
    </location>
</feature>
<feature type="topological domain" description="Extracellular" evidence="1">
    <location>
        <begin position="149"/>
        <end position="161"/>
    </location>
</feature>
<feature type="transmembrane region" description="Helical" evidence="1">
    <location>
        <begin position="162"/>
        <end position="182"/>
    </location>
</feature>
<feature type="topological domain" description="Cytoplasmic" evidence="1">
    <location>
        <begin position="183"/>
        <end position="197"/>
    </location>
</feature>
<feature type="transmembrane region" description="Helical" evidence="1">
    <location>
        <begin position="198"/>
        <end position="218"/>
    </location>
</feature>
<feature type="topological domain" description="Extracellular" evidence="1">
    <location>
        <begin position="219"/>
        <end position="238"/>
    </location>
</feature>
<feature type="transmembrane region" description="Helical" evidence="1">
    <location>
        <begin position="239"/>
        <end position="259"/>
    </location>
</feature>
<feature type="topological domain" description="Cytoplasmic" evidence="1">
    <location>
        <begin position="260"/>
        <end position="281"/>
    </location>
</feature>
<feature type="transmembrane region" description="Helical" evidence="1">
    <location>
        <begin position="282"/>
        <end position="302"/>
    </location>
</feature>
<feature type="topological domain" description="Extracellular" evidence="1">
    <location>
        <begin position="303"/>
        <end position="325"/>
    </location>
</feature>
<feature type="transmembrane region" description="Helical" evidence="1">
    <location>
        <begin position="326"/>
        <end position="346"/>
    </location>
</feature>
<feature type="topological domain" description="Cytoplasmic" evidence="1">
    <location>
        <begin position="347"/>
        <end position="360"/>
    </location>
</feature>
<feature type="transmembrane region" description="Helical" evidence="1">
    <location>
        <begin position="361"/>
        <end position="381"/>
    </location>
</feature>
<feature type="topological domain" description="Extracellular" evidence="1">
    <location>
        <begin position="382"/>
        <end position="384"/>
    </location>
</feature>
<feature type="transmembrane region" description="Helical" evidence="1">
    <location>
        <begin position="385"/>
        <end position="405"/>
    </location>
</feature>
<feature type="topological domain" description="Cytoplasmic" evidence="1">
    <location>
        <begin position="406"/>
        <end position="411"/>
    </location>
</feature>
<feature type="transmembrane region" description="Helical" evidence="1">
    <location>
        <begin position="412"/>
        <end position="432"/>
    </location>
</feature>
<feature type="topological domain" description="Extracellular" evidence="1">
    <location>
        <begin position="433"/>
        <end position="463"/>
    </location>
</feature>
<feature type="region of interest" description="Required for autoinhibitory regulation">
    <location>
        <begin position="25"/>
        <end position="33"/>
    </location>
</feature>
<feature type="region of interest" description="Required for interaction with autoinhibitory region">
    <location>
        <begin position="56"/>
        <end position="62"/>
    </location>
</feature>
<feature type="region of interest" description="Required for Ca(2+)/H(+) exchange activity">
    <location>
        <begin position="87"/>
        <end position="95"/>
    </location>
</feature>
<feature type="region of interest" description="Cation selection" evidence="1">
    <location>
        <begin position="137"/>
        <end position="172"/>
    </location>
</feature>
<feature type="region of interest" description="Cation selection" evidence="1">
    <location>
        <begin position="333"/>
        <end position="368"/>
    </location>
</feature>
<feature type="modified residue" description="N-acetylalanine" evidence="16">
    <location>
        <position position="2"/>
    </location>
</feature>
<feature type="glycosylation site" description="N-linked (GlcNAc...) asparagine" evidence="1">
    <location>
        <position position="318"/>
    </location>
</feature>
<feature type="splice variant" id="VSP_022343" description="In isoform 2." evidence="14">
    <original>KQNAIHLGHQAMNNVVTATGGGVFSS</original>
    <variation>SELVFKCICMLLLGKTIIEAYNTHISNGNASSNKVKTG</variation>
    <location>
        <begin position="438"/>
        <end position="463"/>
    </location>
</feature>
<feature type="mutagenesis site" description="No effect on autoinhibitory regulation." evidence="4">
    <original>T</original>
    <variation>A</variation>
    <location>
        <position position="6"/>
    </location>
</feature>
<feature type="mutagenesis site" description="No effect on autoinhibitory regulation." evidence="4">
    <original>S</original>
    <variation>A</variation>
    <location>
        <position position="10"/>
    </location>
</feature>
<feature type="mutagenesis site" description="No effect on autoinhibitory regulation." evidence="4">
    <original>S</original>
    <variation>A</variation>
    <location>
        <position position="24"/>
    </location>
</feature>
<feature type="mutagenesis site" description="No effect on autoinhibitory regulation." evidence="4">
    <original>S</original>
    <variation>A</variation>
    <location>
        <position position="25"/>
    </location>
</feature>
<feature type="mutagenesis site" description="Loss of autoinhibitory regulation." evidence="4">
    <original>S</original>
    <variation>D</variation>
    <location>
        <position position="25"/>
    </location>
</feature>
<feature type="mutagenesis site" description="No effect on autoinhibitory regulation." evidence="4">
    <original>S</original>
    <variation>T</variation>
    <location>
        <position position="25"/>
    </location>
</feature>
<feature type="mutagenesis site" description="Loss of autoinhibitory regulation; when associated with A-32." evidence="4">
    <original>R</original>
    <variation>A</variation>
    <location>
        <position position="29"/>
    </location>
</feature>
<feature type="mutagenesis site" description="Loss of autoinhibitory regulation; when associated with A-29." evidence="4">
    <original>R</original>
    <variation>A</variation>
    <location>
        <position position="32"/>
    </location>
</feature>
<feature type="mutagenesis site" description="Loss of autoinhibitory regulation." evidence="4">
    <original>T</original>
    <variation>A</variation>
    <location>
        <position position="33"/>
    </location>
</feature>
<feature type="mutagenesis site" description="Loss of autoinhibitory regulation." evidence="4">
    <original>T</original>
    <variation>D</variation>
    <location>
        <position position="33"/>
    </location>
</feature>
<feature type="mutagenesis site" description="Loss of autoinhibitory regulation." evidence="4">
    <original>T</original>
    <variation>E</variation>
    <location>
        <position position="33"/>
    </location>
</feature>
<feature type="mutagenesis site" description="Loss of autoinhibitory regulation." evidence="4">
    <original>T</original>
    <variation>S</variation>
    <location>
        <position position="33"/>
    </location>
</feature>
<feature type="mutagenesis site" description="No effect on transport activity." evidence="10">
    <original>H</original>
    <variation>A</variation>
    <location>
        <position position="259"/>
    </location>
</feature>
<feature type="mutagenesis site" description="Loss of transport activity." evidence="10">
    <original>H</original>
    <variation>A</variation>
    <location>
        <position position="338"/>
    </location>
</feature>
<feature type="mutagenesis site" description="Reduced transport activity." evidence="10">
    <original>H</original>
    <variation>K</variation>
    <location>
        <position position="338"/>
    </location>
</feature>
<feature type="mutagenesis site" description="Increased affinity for Cd(2+) and Zn(2+) transport." evidence="10">
    <original>H</original>
    <variation>N</variation>
    <location>
        <position position="338"/>
    </location>
</feature>
<feature type="mutagenesis site" description="No effect on transport activity." evidence="10">
    <original>H</original>
    <variation>Q</variation>
    <location>
        <position position="338"/>
    </location>
</feature>
<feature type="mutagenesis site" description="No effect on transport activity." evidence="10">
    <original>H</original>
    <variation>A</variation>
    <location>
        <position position="412"/>
    </location>
</feature>
<feature type="mutagenesis site" description="No effect on transport activity." evidence="10">
    <original>H</original>
    <variation>A</variation>
    <location>
        <position position="443"/>
    </location>
</feature>
<feature type="mutagenesis site" description="No effect on transport activity." evidence="10">
    <original>H</original>
    <variation>A</variation>
    <location>
        <position position="446"/>
    </location>
</feature>
<feature type="sequence conflict" description="In Ref. 5; AAB05913." evidence="14" ref="5">
    <original>I</original>
    <variation>T</variation>
    <location>
        <position position="374"/>
    </location>
</feature>
<feature type="sequence conflict" description="In Ref. 5; AAB05913." evidence="14" ref="5">
    <original>A</original>
    <variation>V</variation>
    <location>
        <position position="396"/>
    </location>
</feature>
<organism>
    <name type="scientific">Arabidopsis thaliana</name>
    <name type="common">Mouse-ear cress</name>
    <dbReference type="NCBI Taxonomy" id="3702"/>
    <lineage>
        <taxon>Eukaryota</taxon>
        <taxon>Viridiplantae</taxon>
        <taxon>Streptophyta</taxon>
        <taxon>Embryophyta</taxon>
        <taxon>Tracheophyta</taxon>
        <taxon>Spermatophyta</taxon>
        <taxon>Magnoliopsida</taxon>
        <taxon>eudicotyledons</taxon>
        <taxon>Gunneridae</taxon>
        <taxon>Pentapetalae</taxon>
        <taxon>rosids</taxon>
        <taxon>malvids</taxon>
        <taxon>Brassicales</taxon>
        <taxon>Brassicaceae</taxon>
        <taxon>Camelineae</taxon>
        <taxon>Arabidopsis</taxon>
    </lineage>
</organism>
<gene>
    <name type="primary">CAX1</name>
    <name type="synonym">RCI4</name>
    <name type="ordered locus">At2g38170</name>
    <name type="ORF">F16M14.10</name>
</gene>
<protein>
    <recommendedName>
        <fullName>Vacuolar cation/proton exchanger 1</fullName>
    </recommendedName>
    <alternativeName>
        <fullName>Ca(2+)/H(+) antiporter CAX1</fullName>
    </alternativeName>
    <alternativeName>
        <fullName>Ca(2+)/H(+) exchanger 1</fullName>
    </alternativeName>
    <alternativeName>
        <fullName>Protein CATION EXCHANGER 1</fullName>
    </alternativeName>
    <alternativeName>
        <fullName>Protein RARE COLD INDUCIBLE 4</fullName>
    </alternativeName>
</protein>
<keyword id="KW-0007">Acetylation</keyword>
<keyword id="KW-0025">Alternative splicing</keyword>
<keyword id="KW-0050">Antiport</keyword>
<keyword id="KW-0106">Calcium</keyword>
<keyword id="KW-0109">Calcium transport</keyword>
<keyword id="KW-0325">Glycoprotein</keyword>
<keyword id="KW-0406">Ion transport</keyword>
<keyword id="KW-0472">Membrane</keyword>
<keyword id="KW-1185">Reference proteome</keyword>
<keyword id="KW-0812">Transmembrane</keyword>
<keyword id="KW-1133">Transmembrane helix</keyword>
<keyword id="KW-0813">Transport</keyword>
<keyword id="KW-0926">Vacuole</keyword>
<evidence type="ECO:0000255" key="1"/>
<evidence type="ECO:0000269" key="2">
    <source>
    </source>
</evidence>
<evidence type="ECO:0000269" key="3">
    <source>
    </source>
</evidence>
<evidence type="ECO:0000269" key="4">
    <source>
    </source>
</evidence>
<evidence type="ECO:0000269" key="5">
    <source>
    </source>
</evidence>
<evidence type="ECO:0000269" key="6">
    <source>
    </source>
</evidence>
<evidence type="ECO:0000269" key="7">
    <source>
    </source>
</evidence>
<evidence type="ECO:0000269" key="8">
    <source>
    </source>
</evidence>
<evidence type="ECO:0000269" key="9">
    <source>
    </source>
</evidence>
<evidence type="ECO:0000269" key="10">
    <source>
    </source>
</evidence>
<evidence type="ECO:0000269" key="11">
    <source>
    </source>
</evidence>
<evidence type="ECO:0000269" key="12">
    <source>
    </source>
</evidence>
<evidence type="ECO:0000269" key="13">
    <source>
    </source>
</evidence>
<evidence type="ECO:0000305" key="14"/>
<evidence type="ECO:0000305" key="15">
    <source>
    </source>
</evidence>
<evidence type="ECO:0007744" key="16">
    <source>
    </source>
</evidence>
<comment type="function">
    <text evidence="6 7 12">Vacuolar cation/proton exchanger (CAX). Translocates Ca(2+) and other metal ions into vacuoles using the proton gradient formed by H(+)-ATPase and H(+)-pyrophosphatase. Involved in ion homeostasis in association with CAX3. May play a role in cold-acclimation response.</text>
</comment>
<comment type="activity regulation">
    <text evidence="3 5 8 13">Activated by monothiol glutaredoxin GRXS14 and CXIP4. Inhibited by excess of Ca(2+) and Cd(2+), Na(+) and K(+), but not Mn(2+).</text>
</comment>
<comment type="biophysicochemical properties">
    <kinetics>
        <KM evidence="9 10">230 uM for Cd(2+)</KM>
        <KM evidence="9 10">225 uM for Zn(2+)</KM>
        <text>Measured in vacuolar yeast membrane vesicles with a shorter CAX1 starting at Met-37.</text>
    </kinetics>
    <phDependence>
        <text evidence="9 10">Optimum pH is 7.5 for cytosolic pH.</text>
    </phDependence>
</comment>
<comment type="subunit">
    <text evidence="5 8">Interacts with GRXS14 and CXIP4.</text>
</comment>
<comment type="interaction">
    <interactant intactId="EBI-2292388">
        <id>Q39253</id>
    </interactant>
    <interactant intactId="EBI-2292420">
        <id>Q93Z81</id>
        <label>CAX3</label>
    </interactant>
    <organismsDiffer>false</organismsDiffer>
    <experiments>4</experiments>
</comment>
<comment type="subcellular location">
    <subcellularLocation>
        <location evidence="15">Vacuole membrane</location>
        <topology evidence="15">Multi-pass membrane protein</topology>
    </subcellularLocation>
    <text>Tonoplast.</text>
</comment>
<comment type="alternative products">
    <event type="alternative splicing"/>
    <isoform>
        <id>Q39253-1</id>
        <name>1</name>
        <sequence type="displayed"/>
    </isoform>
    <isoform>
        <id>Q39253-2</id>
        <name>2</name>
        <sequence type="described" ref="VSP_022343"/>
    </isoform>
</comment>
<comment type="tissue specificity">
    <text evidence="7">Expressed at low levels in leaves, stems and flowers.</text>
</comment>
<comment type="induction">
    <text evidence="2 7">By cold in leaves. Highly induced by Ca(2+) and at low levels by Na(+) and Ni(2+).</text>
</comment>
<comment type="disruption phenotype">
    <text evidence="12">Plants exhibit a 50% reduction in tonoplast Ca(2+)/H(+) exchange activity, a 40% reduction in tonoplast V-type H(+)-translocating ATPase activity, a 36% increase in tonoplast Ca(2+)-ATPase activity and an increased expression of CAX3 and CAX4. These plants exhibit altered plant development, perturbed hormone sensitivities, altered auxin signaling response, lower sensitivity to other metal ions and increased freezing tolerance after cold acclimation.</text>
</comment>
<comment type="biotechnology">
    <text evidence="11 13">CAX1 expression in tomato increases calcium content and prolonges shelf life and may serve as an alternative to the application of CaCl(2) used to extend shelf life in numerous agricultural commodities. Expression in potato tubers increases calcium content by 3-fold without the adverse effect of increasing other metal ion contents.</text>
</comment>
<comment type="miscellaneous">
    <molecule>Isoform 2</molecule>
    <text evidence="14">May be due to intron retention.</text>
</comment>
<comment type="similarity">
    <text evidence="14">Belongs to the Ca(2+):cation antiporter (CaCA) (TC 2.A.19) family. Cation/proton exchanger (CAX) subfamily.</text>
</comment>
<proteinExistence type="evidence at protein level"/>